<evidence type="ECO:0000255" key="1">
    <source>
        <dbReference type="HAMAP-Rule" id="MF_00332"/>
    </source>
</evidence>
<evidence type="ECO:0000256" key="2">
    <source>
        <dbReference type="SAM" id="MobiDB-lite"/>
    </source>
</evidence>
<gene>
    <name evidence="1" type="primary">dnaK</name>
    <name type="ordered locus">RAF_ORF0225</name>
</gene>
<dbReference type="EMBL" id="CP001612">
    <property type="protein sequence ID" value="ACP53187.1"/>
    <property type="molecule type" value="Genomic_DNA"/>
</dbReference>
<dbReference type="RefSeq" id="WP_012719451.1">
    <property type="nucleotide sequence ID" value="NC_012633.1"/>
</dbReference>
<dbReference type="SMR" id="C3PMM7"/>
<dbReference type="KEGG" id="raf:RAF_ORF0225"/>
<dbReference type="HOGENOM" id="CLU_005965_2_1_5"/>
<dbReference type="Proteomes" id="UP000002305">
    <property type="component" value="Chromosome"/>
</dbReference>
<dbReference type="GO" id="GO:0005524">
    <property type="term" value="F:ATP binding"/>
    <property type="evidence" value="ECO:0007669"/>
    <property type="project" value="UniProtKB-UniRule"/>
</dbReference>
<dbReference type="GO" id="GO:0140662">
    <property type="term" value="F:ATP-dependent protein folding chaperone"/>
    <property type="evidence" value="ECO:0007669"/>
    <property type="project" value="InterPro"/>
</dbReference>
<dbReference type="GO" id="GO:0051082">
    <property type="term" value="F:unfolded protein binding"/>
    <property type="evidence" value="ECO:0007669"/>
    <property type="project" value="InterPro"/>
</dbReference>
<dbReference type="CDD" id="cd11733">
    <property type="entry name" value="ASKHA_NBD_HSP70_HSPA9"/>
    <property type="match status" value="1"/>
</dbReference>
<dbReference type="FunFam" id="2.60.34.10:FF:000014">
    <property type="entry name" value="Chaperone protein DnaK HSP70"/>
    <property type="match status" value="1"/>
</dbReference>
<dbReference type="FunFam" id="3.30.420.40:FF:000020">
    <property type="entry name" value="Chaperone protein HscA homolog"/>
    <property type="match status" value="1"/>
</dbReference>
<dbReference type="FunFam" id="1.20.1270.10:FF:000001">
    <property type="entry name" value="Molecular chaperone DnaK"/>
    <property type="match status" value="1"/>
</dbReference>
<dbReference type="FunFam" id="3.30.420.40:FF:000004">
    <property type="entry name" value="Molecular chaperone DnaK"/>
    <property type="match status" value="1"/>
</dbReference>
<dbReference type="FunFam" id="3.90.640.10:FF:000003">
    <property type="entry name" value="Molecular chaperone DnaK"/>
    <property type="match status" value="1"/>
</dbReference>
<dbReference type="Gene3D" id="1.20.1270.10">
    <property type="match status" value="1"/>
</dbReference>
<dbReference type="Gene3D" id="3.30.420.40">
    <property type="match status" value="2"/>
</dbReference>
<dbReference type="Gene3D" id="3.90.640.10">
    <property type="entry name" value="Actin, Chain A, domain 4"/>
    <property type="match status" value="1"/>
</dbReference>
<dbReference type="Gene3D" id="2.60.34.10">
    <property type="entry name" value="Substrate Binding Domain Of DNAk, Chain A, domain 1"/>
    <property type="match status" value="1"/>
</dbReference>
<dbReference type="HAMAP" id="MF_00332">
    <property type="entry name" value="DnaK"/>
    <property type="match status" value="1"/>
</dbReference>
<dbReference type="InterPro" id="IPR043129">
    <property type="entry name" value="ATPase_NBD"/>
</dbReference>
<dbReference type="InterPro" id="IPR012725">
    <property type="entry name" value="Chaperone_DnaK"/>
</dbReference>
<dbReference type="InterPro" id="IPR018181">
    <property type="entry name" value="Heat_shock_70_CS"/>
</dbReference>
<dbReference type="InterPro" id="IPR029048">
    <property type="entry name" value="HSP70_C_sf"/>
</dbReference>
<dbReference type="InterPro" id="IPR029047">
    <property type="entry name" value="HSP70_peptide-bd_sf"/>
</dbReference>
<dbReference type="InterPro" id="IPR013126">
    <property type="entry name" value="Hsp_70_fam"/>
</dbReference>
<dbReference type="NCBIfam" id="NF001413">
    <property type="entry name" value="PRK00290.1"/>
    <property type="match status" value="1"/>
</dbReference>
<dbReference type="NCBIfam" id="NF003520">
    <property type="entry name" value="PRK05183.1"/>
    <property type="match status" value="1"/>
</dbReference>
<dbReference type="NCBIfam" id="TIGR02350">
    <property type="entry name" value="prok_dnaK"/>
    <property type="match status" value="1"/>
</dbReference>
<dbReference type="PANTHER" id="PTHR19375">
    <property type="entry name" value="HEAT SHOCK PROTEIN 70KDA"/>
    <property type="match status" value="1"/>
</dbReference>
<dbReference type="Pfam" id="PF00012">
    <property type="entry name" value="HSP70"/>
    <property type="match status" value="1"/>
</dbReference>
<dbReference type="PRINTS" id="PR00301">
    <property type="entry name" value="HEATSHOCK70"/>
</dbReference>
<dbReference type="SUPFAM" id="SSF53067">
    <property type="entry name" value="Actin-like ATPase domain"/>
    <property type="match status" value="2"/>
</dbReference>
<dbReference type="SUPFAM" id="SSF100934">
    <property type="entry name" value="Heat shock protein 70kD (HSP70), C-terminal subdomain"/>
    <property type="match status" value="1"/>
</dbReference>
<dbReference type="SUPFAM" id="SSF100920">
    <property type="entry name" value="Heat shock protein 70kD (HSP70), peptide-binding domain"/>
    <property type="match status" value="1"/>
</dbReference>
<dbReference type="PROSITE" id="PS00297">
    <property type="entry name" value="HSP70_1"/>
    <property type="match status" value="1"/>
</dbReference>
<dbReference type="PROSITE" id="PS00329">
    <property type="entry name" value="HSP70_2"/>
    <property type="match status" value="1"/>
</dbReference>
<dbReference type="PROSITE" id="PS01036">
    <property type="entry name" value="HSP70_3"/>
    <property type="match status" value="1"/>
</dbReference>
<organism>
    <name type="scientific">Rickettsia africae (strain ESF-5)</name>
    <dbReference type="NCBI Taxonomy" id="347255"/>
    <lineage>
        <taxon>Bacteria</taxon>
        <taxon>Pseudomonadati</taxon>
        <taxon>Pseudomonadota</taxon>
        <taxon>Alphaproteobacteria</taxon>
        <taxon>Rickettsiales</taxon>
        <taxon>Rickettsiaceae</taxon>
        <taxon>Rickettsieae</taxon>
        <taxon>Rickettsia</taxon>
        <taxon>spotted fever group</taxon>
    </lineage>
</organism>
<keyword id="KW-0067">ATP-binding</keyword>
<keyword id="KW-0143">Chaperone</keyword>
<keyword id="KW-0547">Nucleotide-binding</keyword>
<keyword id="KW-0597">Phosphoprotein</keyword>
<keyword id="KW-0346">Stress response</keyword>
<accession>C3PMM7</accession>
<reference key="1">
    <citation type="journal article" date="2009" name="BMC Genomics">
        <title>Analysis of the Rickettsia africae genome reveals that virulence acquisition in Rickettsia species may be explained by genome reduction.</title>
        <authorList>
            <person name="Fournier P.-E."/>
            <person name="El Karkouri K."/>
            <person name="Leroy Q."/>
            <person name="Robert C."/>
            <person name="Giumelli B."/>
            <person name="Renesto P."/>
            <person name="Socolovschi C."/>
            <person name="Parola P."/>
            <person name="Audic S."/>
            <person name="Raoult D."/>
        </authorList>
    </citation>
    <scope>NUCLEOTIDE SEQUENCE [LARGE SCALE GENOMIC DNA]</scope>
    <source>
        <strain>ESF-5</strain>
    </source>
</reference>
<name>DNAK_RICAE</name>
<proteinExistence type="inferred from homology"/>
<protein>
    <recommendedName>
        <fullName evidence="1">Chaperone protein DnaK</fullName>
    </recommendedName>
    <alternativeName>
        <fullName evidence="1">HSP70</fullName>
    </alternativeName>
    <alternativeName>
        <fullName evidence="1">Heat shock 70 kDa protein</fullName>
    </alternativeName>
    <alternativeName>
        <fullName evidence="1">Heat shock protein 70</fullName>
    </alternativeName>
</protein>
<feature type="chain" id="PRO_1000205196" description="Chaperone protein DnaK">
    <location>
        <begin position="1"/>
        <end position="627"/>
    </location>
</feature>
<feature type="region of interest" description="Disordered" evidence="2">
    <location>
        <begin position="593"/>
        <end position="627"/>
    </location>
</feature>
<feature type="compositionally biased region" description="Polar residues" evidence="2">
    <location>
        <begin position="601"/>
        <end position="610"/>
    </location>
</feature>
<feature type="compositionally biased region" description="Basic and acidic residues" evidence="2">
    <location>
        <begin position="611"/>
        <end position="627"/>
    </location>
</feature>
<feature type="modified residue" description="Phosphothreonine; by autocatalysis" evidence="1">
    <location>
        <position position="197"/>
    </location>
</feature>
<sequence length="627" mass="67954">MGKVIGIDLGTTNSCVAVMEGKEPKVIENAEGERTTPSIIAFANGEKLVGQSAKRQAVTNPRNTIYAVKRLIGRNFIDPMVRKDQGIVPYNIVKADNGDAWVEADNNKYSPSQISAFILQKMKETAENYLGDKVTQAVITVPAYFNDAQRQATKDAGKIAGLEVLRIINEPTAAALAYGFEKSASKTIAVYDLGGGTFDVSILEIADGVFEVKSTNGDTFLGGEDFDTRILNHLIDVFKKENGIDLSKDPLALQRLKEAAEKAKKELSSAVTTDINLPYITADSSGPKHLNIKFTRAELEKLVDDLIEKTIEPCRKALQDAGFKASDIQEVILVGGMTRMPKVQEAVKKFFGREPHKGVNPDEVVALGAAIQGGVLNKEVTDILLLDVTPLSLGIETLGGVFTRLIDRNTTIPTKKSQIFSTADDNQHAVTIRVFQGEREMAKDNKLLGQFNLEGIPLAPRGLPQIEVTFDIDANGIVHVSAKDKASGKEQKVTIQASGGLSDAEIEQMVKDAEQNADEDKKRKELIEAKNAADSLVYSTEKTLTEYGDKLSSDDKGAVEEALAALKAVLESEDTALIKEKTESLTAASMKIGEAMHKAQSESQPAAKSATNDEKIVDADFQDVEKK</sequence>
<comment type="function">
    <text evidence="1">Acts as a chaperone.</text>
</comment>
<comment type="induction">
    <text evidence="1">By stress conditions e.g. heat shock.</text>
</comment>
<comment type="similarity">
    <text evidence="1">Belongs to the heat shock protein 70 family.</text>
</comment>